<comment type="function">
    <text evidence="2">May play a role in plant immunity.</text>
</comment>
<comment type="subcellular location">
    <subcellularLocation>
        <location evidence="1">Cell membrane</location>
        <topology evidence="3">Single-pass membrane protein</topology>
    </subcellularLocation>
</comment>
<comment type="tissue specificity">
    <text evidence="5">Expressed at low levels in roots, rosette leaves, cauline leaves, stems, flowers and siliques.</text>
</comment>
<comment type="induction">
    <text evidence="5">Induced by spermine and infection with the cucumber mosaic virus (CMV-Y and CMV-B2 strains).</text>
</comment>
<comment type="miscellaneous">
    <text evidence="6">Plants over-expressing NHL2 develop leaf necrotic lesions surrounded by chlorosis.</text>
</comment>
<gene>
    <name evidence="7" type="primary">NHL2</name>
    <name evidence="9" type="ordered locus">At3g11650</name>
    <name evidence="10" type="ORF">T19F11.5</name>
</gene>
<organism>
    <name type="scientific">Arabidopsis thaliana</name>
    <name type="common">Mouse-ear cress</name>
    <dbReference type="NCBI Taxonomy" id="3702"/>
    <lineage>
        <taxon>Eukaryota</taxon>
        <taxon>Viridiplantae</taxon>
        <taxon>Streptophyta</taxon>
        <taxon>Embryophyta</taxon>
        <taxon>Tracheophyta</taxon>
        <taxon>Spermatophyta</taxon>
        <taxon>Magnoliopsida</taxon>
        <taxon>eudicotyledons</taxon>
        <taxon>Gunneridae</taxon>
        <taxon>Pentapetalae</taxon>
        <taxon>rosids</taxon>
        <taxon>malvids</taxon>
        <taxon>Brassicales</taxon>
        <taxon>Brassicaceae</taxon>
        <taxon>Camelineae</taxon>
        <taxon>Arabidopsis</taxon>
    </lineage>
</organism>
<sequence>MGSKQPYLNGAYYGPSIPPPPKAHRSYNSPGFGCCCFSCLGSCLRCCGCCILSLICNILIAVAVILGVAALILWLIFRPNAVKFYVADANLNRFSFDPNNNLHYSLDLNFTIRNPNQRVGVYYDEFSVSGYYGDQRFGSANVSSFYQGHKNTTVILTKIEGQNLVVLGDGARTDLKDDEKSGIYRINAKLRLSVRFKFWFIKSWKLKPKIKCDDLKIPLGSSNSTGGFKFQPVQCDFDLS</sequence>
<keyword id="KW-1003">Cell membrane</keyword>
<keyword id="KW-0325">Glycoprotein</keyword>
<keyword id="KW-0472">Membrane</keyword>
<keyword id="KW-0611">Plant defense</keyword>
<keyword id="KW-1185">Reference proteome</keyword>
<keyword id="KW-0812">Transmembrane</keyword>
<keyword id="KW-1133">Transmembrane helix</keyword>
<reference key="1">
    <citation type="journal article" date="2000" name="Plant Physiol. Biochem.">
        <title>A gene family in Arabidopsis thaliana with sequence similarity to NDR1 and HIN1.</title>
        <authorList>
            <person name="Doermann P."/>
            <person name="Gopalan S."/>
            <person name="He S.Y."/>
            <person name="Benning C."/>
        </authorList>
    </citation>
    <scope>NUCLEOTIDE SEQUENCE [MRNA]</scope>
    <scope>GENE FAMILY</scope>
</reference>
<reference key="2">
    <citation type="journal article" date="2000" name="Nature">
        <title>Sequence and analysis of chromosome 3 of the plant Arabidopsis thaliana.</title>
        <authorList>
            <person name="Salanoubat M."/>
            <person name="Lemcke K."/>
            <person name="Rieger M."/>
            <person name="Ansorge W."/>
            <person name="Unseld M."/>
            <person name="Fartmann B."/>
            <person name="Valle G."/>
            <person name="Bloecker H."/>
            <person name="Perez-Alonso M."/>
            <person name="Obermaier B."/>
            <person name="Delseny M."/>
            <person name="Boutry M."/>
            <person name="Grivell L.A."/>
            <person name="Mache R."/>
            <person name="Puigdomenech P."/>
            <person name="De Simone V."/>
            <person name="Choisne N."/>
            <person name="Artiguenave F."/>
            <person name="Robert C."/>
            <person name="Brottier P."/>
            <person name="Wincker P."/>
            <person name="Cattolico L."/>
            <person name="Weissenbach J."/>
            <person name="Saurin W."/>
            <person name="Quetier F."/>
            <person name="Schaefer M."/>
            <person name="Mueller-Auer S."/>
            <person name="Gabel C."/>
            <person name="Fuchs M."/>
            <person name="Benes V."/>
            <person name="Wurmbach E."/>
            <person name="Drzonek H."/>
            <person name="Erfle H."/>
            <person name="Jordan N."/>
            <person name="Bangert S."/>
            <person name="Wiedelmann R."/>
            <person name="Kranz H."/>
            <person name="Voss H."/>
            <person name="Holland R."/>
            <person name="Brandt P."/>
            <person name="Nyakatura G."/>
            <person name="Vezzi A."/>
            <person name="D'Angelo M."/>
            <person name="Pallavicini A."/>
            <person name="Toppo S."/>
            <person name="Simionati B."/>
            <person name="Conrad A."/>
            <person name="Hornischer K."/>
            <person name="Kauer G."/>
            <person name="Loehnert T.-H."/>
            <person name="Nordsiek G."/>
            <person name="Reichelt J."/>
            <person name="Scharfe M."/>
            <person name="Schoen O."/>
            <person name="Bargues M."/>
            <person name="Terol J."/>
            <person name="Climent J."/>
            <person name="Navarro P."/>
            <person name="Collado C."/>
            <person name="Perez-Perez A."/>
            <person name="Ottenwaelder B."/>
            <person name="Duchemin D."/>
            <person name="Cooke R."/>
            <person name="Laudie M."/>
            <person name="Berger-Llauro C."/>
            <person name="Purnelle B."/>
            <person name="Masuy D."/>
            <person name="de Haan M."/>
            <person name="Maarse A.C."/>
            <person name="Alcaraz J.-P."/>
            <person name="Cottet A."/>
            <person name="Casacuberta E."/>
            <person name="Monfort A."/>
            <person name="Argiriou A."/>
            <person name="Flores M."/>
            <person name="Liguori R."/>
            <person name="Vitale D."/>
            <person name="Mannhaupt G."/>
            <person name="Haase D."/>
            <person name="Schoof H."/>
            <person name="Rudd S."/>
            <person name="Zaccaria P."/>
            <person name="Mewes H.-W."/>
            <person name="Mayer K.F.X."/>
            <person name="Kaul S."/>
            <person name="Town C.D."/>
            <person name="Koo H.L."/>
            <person name="Tallon L.J."/>
            <person name="Jenkins J."/>
            <person name="Rooney T."/>
            <person name="Rizzo M."/>
            <person name="Walts A."/>
            <person name="Utterback T."/>
            <person name="Fujii C.Y."/>
            <person name="Shea T.P."/>
            <person name="Creasy T.H."/>
            <person name="Haas B."/>
            <person name="Maiti R."/>
            <person name="Wu D."/>
            <person name="Peterson J."/>
            <person name="Van Aken S."/>
            <person name="Pai G."/>
            <person name="Militscher J."/>
            <person name="Sellers P."/>
            <person name="Gill J.E."/>
            <person name="Feldblyum T.V."/>
            <person name="Preuss D."/>
            <person name="Lin X."/>
            <person name="Nierman W.C."/>
            <person name="Salzberg S.L."/>
            <person name="White O."/>
            <person name="Venter J.C."/>
            <person name="Fraser C.M."/>
            <person name="Kaneko T."/>
            <person name="Nakamura Y."/>
            <person name="Sato S."/>
            <person name="Kato T."/>
            <person name="Asamizu E."/>
            <person name="Sasamoto S."/>
            <person name="Kimura T."/>
            <person name="Idesawa K."/>
            <person name="Kawashima K."/>
            <person name="Kishida Y."/>
            <person name="Kiyokawa C."/>
            <person name="Kohara M."/>
            <person name="Matsumoto M."/>
            <person name="Matsuno A."/>
            <person name="Muraki A."/>
            <person name="Nakayama S."/>
            <person name="Nakazaki N."/>
            <person name="Shinpo S."/>
            <person name="Takeuchi C."/>
            <person name="Wada T."/>
            <person name="Watanabe A."/>
            <person name="Yamada M."/>
            <person name="Yasuda M."/>
            <person name="Tabata S."/>
        </authorList>
    </citation>
    <scope>NUCLEOTIDE SEQUENCE [LARGE SCALE GENOMIC DNA]</scope>
    <source>
        <strain>cv. Columbia</strain>
    </source>
</reference>
<reference key="3">
    <citation type="journal article" date="2017" name="Plant J.">
        <title>Araport11: a complete reannotation of the Arabidopsis thaliana reference genome.</title>
        <authorList>
            <person name="Cheng C.Y."/>
            <person name="Krishnakumar V."/>
            <person name="Chan A.P."/>
            <person name="Thibaud-Nissen F."/>
            <person name="Schobel S."/>
            <person name="Town C.D."/>
        </authorList>
    </citation>
    <scope>GENOME REANNOTATION</scope>
    <source>
        <strain>cv. Columbia</strain>
    </source>
</reference>
<reference key="4">
    <citation type="submission" date="2006-02" db="EMBL/GenBank/DDBJ databases">
        <title>Arabidopsis ORF clones.</title>
        <authorList>
            <person name="Shinn P."/>
            <person name="Chen H."/>
            <person name="Kim C.J."/>
            <person name="Ecker J.R."/>
        </authorList>
    </citation>
    <scope>NUCLEOTIDE SEQUENCE [LARGE SCALE MRNA]</scope>
    <source>
        <strain>cv. Columbia</strain>
    </source>
</reference>
<reference key="5">
    <citation type="journal article" date="2004" name="Planta">
        <title>Up-regulation of Arabidopsis thaliana NHL10 in the hypersensitive response to Cucumber mosaic virus infection and in senescing leaves is controlled by signalling pathways that differ in salicylate involvement.</title>
        <authorList>
            <person name="Zheng M.S."/>
            <person name="Takahashi H."/>
            <person name="Miyazaki A."/>
            <person name="Hamamoto H."/>
            <person name="Shah J."/>
            <person name="Yamaguchi I."/>
            <person name="Kusano T."/>
        </authorList>
    </citation>
    <scope>TISSUE SPECIFICITY</scope>
    <scope>INDUCTION BY CMV AND SPERMINE</scope>
</reference>
<accession>Q9SRN1</accession>
<accession>Q9LKQ3</accession>
<evidence type="ECO:0000250" key="1">
    <source>
        <dbReference type="UniProtKB" id="Q9FNH6"/>
    </source>
</evidence>
<evidence type="ECO:0000250" key="2">
    <source>
        <dbReference type="UniProtKB" id="Q9ZVD2"/>
    </source>
</evidence>
<evidence type="ECO:0000255" key="3"/>
<evidence type="ECO:0000255" key="4">
    <source>
        <dbReference type="PROSITE-ProRule" id="PRU00498"/>
    </source>
</evidence>
<evidence type="ECO:0000269" key="5">
    <source>
    </source>
</evidence>
<evidence type="ECO:0000269" key="6">
    <source ref="1"/>
</evidence>
<evidence type="ECO:0000303" key="7">
    <source ref="1"/>
</evidence>
<evidence type="ECO:0000305" key="8"/>
<evidence type="ECO:0000312" key="9">
    <source>
        <dbReference type="Araport" id="AT3G11650"/>
    </source>
</evidence>
<evidence type="ECO:0000312" key="10">
    <source>
        <dbReference type="EMBL" id="AAF02133.1"/>
    </source>
</evidence>
<feature type="chain" id="PRO_0000438809" description="NDR1/HIN1-like protein 2">
    <location>
        <begin position="1"/>
        <end position="240"/>
    </location>
</feature>
<feature type="transmembrane region" description="Helical" evidence="3">
    <location>
        <begin position="57"/>
        <end position="77"/>
    </location>
</feature>
<feature type="glycosylation site" description="N-linked (GlcNAc...) asparagine" evidence="4">
    <location>
        <position position="109"/>
    </location>
</feature>
<feature type="glycosylation site" description="N-linked (GlcNAc...) asparagine" evidence="4">
    <location>
        <position position="141"/>
    </location>
</feature>
<feature type="glycosylation site" description="N-linked (GlcNAc...) asparagine" evidence="4">
    <location>
        <position position="151"/>
    </location>
</feature>
<feature type="glycosylation site" description="N-linked (GlcNAc...) asparagine" evidence="4">
    <location>
        <position position="223"/>
    </location>
</feature>
<feature type="sequence conflict" description="In Ref. 1; AAF88022." evidence="8" ref="1">
    <original>N</original>
    <variation>D</variation>
    <location>
        <position position="187"/>
    </location>
</feature>
<protein>
    <recommendedName>
        <fullName evidence="7">NDR1/HIN1-like protein 2</fullName>
    </recommendedName>
</protein>
<name>NHL2_ARATH</name>
<proteinExistence type="evidence at transcript level"/>
<dbReference type="EMBL" id="AF264698">
    <property type="protein sequence ID" value="AAF88022.1"/>
    <property type="molecule type" value="mRNA"/>
</dbReference>
<dbReference type="EMBL" id="AC009918">
    <property type="protein sequence ID" value="AAF02133.1"/>
    <property type="molecule type" value="Genomic_DNA"/>
</dbReference>
<dbReference type="EMBL" id="CP002686">
    <property type="protein sequence ID" value="AEE75079.1"/>
    <property type="molecule type" value="Genomic_DNA"/>
</dbReference>
<dbReference type="EMBL" id="BT024621">
    <property type="protein sequence ID" value="ABD43019.1"/>
    <property type="molecule type" value="mRNA"/>
</dbReference>
<dbReference type="RefSeq" id="NP_566395.1">
    <property type="nucleotide sequence ID" value="NM_111997.3"/>
</dbReference>
<dbReference type="SMR" id="Q9SRN1"/>
<dbReference type="FunCoup" id="Q9SRN1">
    <property type="interactions" value="61"/>
</dbReference>
<dbReference type="STRING" id="3702.Q9SRN1"/>
<dbReference type="GlyCosmos" id="Q9SRN1">
    <property type="glycosylation" value="4 sites, No reported glycans"/>
</dbReference>
<dbReference type="GlyGen" id="Q9SRN1">
    <property type="glycosylation" value="4 sites"/>
</dbReference>
<dbReference type="iPTMnet" id="Q9SRN1"/>
<dbReference type="PaxDb" id="3702-AT3G11650.1"/>
<dbReference type="ProteomicsDB" id="251324"/>
<dbReference type="EnsemblPlants" id="AT3G11650.1">
    <property type="protein sequence ID" value="AT3G11650.1"/>
    <property type="gene ID" value="AT3G11650"/>
</dbReference>
<dbReference type="GeneID" id="820337"/>
<dbReference type="Gramene" id="AT3G11650.1">
    <property type="protein sequence ID" value="AT3G11650.1"/>
    <property type="gene ID" value="AT3G11650"/>
</dbReference>
<dbReference type="KEGG" id="ath:AT3G11650"/>
<dbReference type="Araport" id="AT3G11650"/>
<dbReference type="TAIR" id="AT3G11650">
    <property type="gene designation" value="NHL2"/>
</dbReference>
<dbReference type="eggNOG" id="ENOG502QUR9">
    <property type="taxonomic scope" value="Eukaryota"/>
</dbReference>
<dbReference type="HOGENOM" id="CLU_051752_2_0_1"/>
<dbReference type="InParanoid" id="Q9SRN1"/>
<dbReference type="OMA" id="CPLNIHR"/>
<dbReference type="PhylomeDB" id="Q9SRN1"/>
<dbReference type="PRO" id="PR:Q9SRN1"/>
<dbReference type="Proteomes" id="UP000006548">
    <property type="component" value="Chromosome 3"/>
</dbReference>
<dbReference type="ExpressionAtlas" id="Q9SRN1">
    <property type="expression patterns" value="baseline and differential"/>
</dbReference>
<dbReference type="GO" id="GO:0009507">
    <property type="term" value="C:chloroplast"/>
    <property type="evidence" value="ECO:0000314"/>
    <property type="project" value="TAIR"/>
</dbReference>
<dbReference type="GO" id="GO:0005886">
    <property type="term" value="C:plasma membrane"/>
    <property type="evidence" value="ECO:0007669"/>
    <property type="project" value="UniProtKB-SubCell"/>
</dbReference>
<dbReference type="GO" id="GO:0009506">
    <property type="term" value="C:plasmodesma"/>
    <property type="evidence" value="ECO:0007005"/>
    <property type="project" value="TAIR"/>
</dbReference>
<dbReference type="GO" id="GO:0051607">
    <property type="term" value="P:defense response to virus"/>
    <property type="evidence" value="ECO:0000270"/>
    <property type="project" value="TAIR"/>
</dbReference>
<dbReference type="InterPro" id="IPR004864">
    <property type="entry name" value="LEA_2"/>
</dbReference>
<dbReference type="InterPro" id="IPR044839">
    <property type="entry name" value="NDR1-like"/>
</dbReference>
<dbReference type="PANTHER" id="PTHR31234">
    <property type="entry name" value="LATE EMBRYOGENESIS ABUNDANT (LEA) HYDROXYPROLINE-RICH GLYCOPROTEIN FAMILY"/>
    <property type="match status" value="1"/>
</dbReference>
<dbReference type="PANTHER" id="PTHR31234:SF2">
    <property type="entry name" value="OS05G0199100 PROTEIN"/>
    <property type="match status" value="1"/>
</dbReference>
<dbReference type="Pfam" id="PF03168">
    <property type="entry name" value="LEA_2"/>
    <property type="match status" value="1"/>
</dbReference>